<reference key="1">
    <citation type="journal article" date="2007" name="Proc. Natl. Acad. Sci. U.S.A.">
        <title>Deep-sea vent epsilon-proteobacterial genomes provide insights into emergence of pathogens.</title>
        <authorList>
            <person name="Nakagawa S."/>
            <person name="Takaki Y."/>
            <person name="Shimamura S."/>
            <person name="Reysenbach A.-L."/>
            <person name="Takai K."/>
            <person name="Horikoshi K."/>
        </authorList>
    </citation>
    <scope>NUCLEOTIDE SEQUENCE [LARGE SCALE GENOMIC DNA]</scope>
    <source>
        <strain>NBC37-1</strain>
    </source>
</reference>
<keyword id="KW-0963">Cytoplasm</keyword>
<keyword id="KW-0275">Fatty acid biosynthesis</keyword>
<keyword id="KW-0276">Fatty acid metabolism</keyword>
<keyword id="KW-0444">Lipid biosynthesis</keyword>
<keyword id="KW-0443">Lipid metabolism</keyword>
<keyword id="KW-0596">Phosphopantetheine</keyword>
<keyword id="KW-0597">Phosphoprotein</keyword>
<accession>A6QC97</accession>
<gene>
    <name evidence="1" type="primary">acpP</name>
    <name type="ordered locus">SUN_2166</name>
</gene>
<name>ACP_SULNB</name>
<evidence type="ECO:0000255" key="1">
    <source>
        <dbReference type="HAMAP-Rule" id="MF_01217"/>
    </source>
</evidence>
<evidence type="ECO:0000255" key="2">
    <source>
        <dbReference type="PROSITE-ProRule" id="PRU00258"/>
    </source>
</evidence>
<protein>
    <recommendedName>
        <fullName evidence="1">Acyl carrier protein</fullName>
        <shortName evidence="1">ACP</shortName>
    </recommendedName>
</protein>
<dbReference type="EMBL" id="AP009179">
    <property type="protein sequence ID" value="BAF73106.1"/>
    <property type="molecule type" value="Genomic_DNA"/>
</dbReference>
<dbReference type="RefSeq" id="WP_012083936.1">
    <property type="nucleotide sequence ID" value="NC_009663.1"/>
</dbReference>
<dbReference type="SMR" id="A6QC97"/>
<dbReference type="STRING" id="387093.SUN_2166"/>
<dbReference type="KEGG" id="sun:SUN_2166"/>
<dbReference type="eggNOG" id="COG0236">
    <property type="taxonomic scope" value="Bacteria"/>
</dbReference>
<dbReference type="HOGENOM" id="CLU_108696_5_1_7"/>
<dbReference type="OrthoDB" id="9804551at2"/>
<dbReference type="UniPathway" id="UPA00094"/>
<dbReference type="Proteomes" id="UP000006378">
    <property type="component" value="Chromosome"/>
</dbReference>
<dbReference type="GO" id="GO:0005829">
    <property type="term" value="C:cytosol"/>
    <property type="evidence" value="ECO:0007669"/>
    <property type="project" value="TreeGrafter"/>
</dbReference>
<dbReference type="GO" id="GO:0016020">
    <property type="term" value="C:membrane"/>
    <property type="evidence" value="ECO:0007669"/>
    <property type="project" value="GOC"/>
</dbReference>
<dbReference type="GO" id="GO:0000035">
    <property type="term" value="F:acyl binding"/>
    <property type="evidence" value="ECO:0007669"/>
    <property type="project" value="TreeGrafter"/>
</dbReference>
<dbReference type="GO" id="GO:0000036">
    <property type="term" value="F:acyl carrier activity"/>
    <property type="evidence" value="ECO:0007669"/>
    <property type="project" value="UniProtKB-UniRule"/>
</dbReference>
<dbReference type="GO" id="GO:0009245">
    <property type="term" value="P:lipid A biosynthetic process"/>
    <property type="evidence" value="ECO:0007669"/>
    <property type="project" value="TreeGrafter"/>
</dbReference>
<dbReference type="Gene3D" id="1.10.1200.10">
    <property type="entry name" value="ACP-like"/>
    <property type="match status" value="1"/>
</dbReference>
<dbReference type="HAMAP" id="MF_01217">
    <property type="entry name" value="Acyl_carrier"/>
    <property type="match status" value="1"/>
</dbReference>
<dbReference type="InterPro" id="IPR003231">
    <property type="entry name" value="ACP"/>
</dbReference>
<dbReference type="InterPro" id="IPR036736">
    <property type="entry name" value="ACP-like_sf"/>
</dbReference>
<dbReference type="InterPro" id="IPR009081">
    <property type="entry name" value="PP-bd_ACP"/>
</dbReference>
<dbReference type="InterPro" id="IPR006162">
    <property type="entry name" value="Ppantetheine_attach_site"/>
</dbReference>
<dbReference type="NCBIfam" id="TIGR00517">
    <property type="entry name" value="acyl_carrier"/>
    <property type="match status" value="1"/>
</dbReference>
<dbReference type="NCBIfam" id="NF002148">
    <property type="entry name" value="PRK00982.1-2"/>
    <property type="match status" value="1"/>
</dbReference>
<dbReference type="NCBIfam" id="NF002150">
    <property type="entry name" value="PRK00982.1-4"/>
    <property type="match status" value="1"/>
</dbReference>
<dbReference type="NCBIfam" id="NF002151">
    <property type="entry name" value="PRK00982.1-5"/>
    <property type="match status" value="1"/>
</dbReference>
<dbReference type="PANTHER" id="PTHR20863">
    <property type="entry name" value="ACYL CARRIER PROTEIN"/>
    <property type="match status" value="1"/>
</dbReference>
<dbReference type="PANTHER" id="PTHR20863:SF76">
    <property type="entry name" value="CARRIER DOMAIN-CONTAINING PROTEIN"/>
    <property type="match status" value="1"/>
</dbReference>
<dbReference type="Pfam" id="PF00550">
    <property type="entry name" value="PP-binding"/>
    <property type="match status" value="1"/>
</dbReference>
<dbReference type="SUPFAM" id="SSF47336">
    <property type="entry name" value="ACP-like"/>
    <property type="match status" value="1"/>
</dbReference>
<dbReference type="PROSITE" id="PS50075">
    <property type="entry name" value="CARRIER"/>
    <property type="match status" value="1"/>
</dbReference>
<dbReference type="PROSITE" id="PS00012">
    <property type="entry name" value="PHOSPHOPANTETHEINE"/>
    <property type="match status" value="1"/>
</dbReference>
<sequence>MALFDDVKEVVVEQLNVSPDEVKEDSKFVEDLGADSLDVVELVMALEEKFDIEIPDDQAEAIATVGDAIKFIENV</sequence>
<feature type="chain" id="PRO_1000066702" description="Acyl carrier protein">
    <location>
        <begin position="1"/>
        <end position="75"/>
    </location>
</feature>
<feature type="domain" description="Carrier" evidence="2">
    <location>
        <begin position="1"/>
        <end position="75"/>
    </location>
</feature>
<feature type="modified residue" description="O-(pantetheine 4'-phosphoryl)serine" evidence="2">
    <location>
        <position position="36"/>
    </location>
</feature>
<organism>
    <name type="scientific">Sulfurovum sp. (strain NBC37-1)</name>
    <dbReference type="NCBI Taxonomy" id="387093"/>
    <lineage>
        <taxon>Bacteria</taxon>
        <taxon>Pseudomonadati</taxon>
        <taxon>Campylobacterota</taxon>
        <taxon>Epsilonproteobacteria</taxon>
        <taxon>Campylobacterales</taxon>
        <taxon>Sulfurovaceae</taxon>
        <taxon>Sulfurovum</taxon>
    </lineage>
</organism>
<proteinExistence type="inferred from homology"/>
<comment type="function">
    <text evidence="1">Carrier of the growing fatty acid chain in fatty acid biosynthesis.</text>
</comment>
<comment type="pathway">
    <text evidence="1">Lipid metabolism; fatty acid biosynthesis.</text>
</comment>
<comment type="subcellular location">
    <subcellularLocation>
        <location evidence="1">Cytoplasm</location>
    </subcellularLocation>
</comment>
<comment type="PTM">
    <text evidence="1">4'-phosphopantetheine is transferred from CoA to a specific serine of apo-ACP by AcpS. This modification is essential for activity because fatty acids are bound in thioester linkage to the sulfhydryl of the prosthetic group.</text>
</comment>
<comment type="similarity">
    <text evidence="1">Belongs to the acyl carrier protein (ACP) family.</text>
</comment>